<gene>
    <name evidence="1" type="primary">adk</name>
    <name type="ordered locus">Acry_1925</name>
</gene>
<name>KAD_ACICJ</name>
<protein>
    <recommendedName>
        <fullName evidence="1">Adenylate kinase</fullName>
        <shortName evidence="1">AK</shortName>
        <ecNumber evidence="1">2.7.4.3</ecNumber>
    </recommendedName>
    <alternativeName>
        <fullName evidence="1">ATP-AMP transphosphorylase</fullName>
    </alternativeName>
    <alternativeName>
        <fullName evidence="1">ATP:AMP phosphotransferase</fullName>
    </alternativeName>
    <alternativeName>
        <fullName evidence="1">Adenylate monophosphate kinase</fullName>
    </alternativeName>
</protein>
<dbReference type="EC" id="2.7.4.3" evidence="1"/>
<dbReference type="EMBL" id="CP000697">
    <property type="protein sequence ID" value="ABQ31126.1"/>
    <property type="molecule type" value="Genomic_DNA"/>
</dbReference>
<dbReference type="RefSeq" id="WP_012039716.1">
    <property type="nucleotide sequence ID" value="NC_009484.1"/>
</dbReference>
<dbReference type="SMR" id="A5FZU4"/>
<dbReference type="STRING" id="349163.Acry_1925"/>
<dbReference type="KEGG" id="acr:Acry_1925"/>
<dbReference type="eggNOG" id="COG0563">
    <property type="taxonomic scope" value="Bacteria"/>
</dbReference>
<dbReference type="HOGENOM" id="CLU_032354_1_2_5"/>
<dbReference type="UniPathway" id="UPA00588">
    <property type="reaction ID" value="UER00649"/>
</dbReference>
<dbReference type="Proteomes" id="UP000000245">
    <property type="component" value="Chromosome"/>
</dbReference>
<dbReference type="GO" id="GO:0005737">
    <property type="term" value="C:cytoplasm"/>
    <property type="evidence" value="ECO:0007669"/>
    <property type="project" value="UniProtKB-SubCell"/>
</dbReference>
<dbReference type="GO" id="GO:0004017">
    <property type="term" value="F:adenylate kinase activity"/>
    <property type="evidence" value="ECO:0007669"/>
    <property type="project" value="UniProtKB-UniRule"/>
</dbReference>
<dbReference type="GO" id="GO:0005524">
    <property type="term" value="F:ATP binding"/>
    <property type="evidence" value="ECO:0007669"/>
    <property type="project" value="UniProtKB-UniRule"/>
</dbReference>
<dbReference type="GO" id="GO:0008270">
    <property type="term" value="F:zinc ion binding"/>
    <property type="evidence" value="ECO:0007669"/>
    <property type="project" value="UniProtKB-UniRule"/>
</dbReference>
<dbReference type="GO" id="GO:0044209">
    <property type="term" value="P:AMP salvage"/>
    <property type="evidence" value="ECO:0007669"/>
    <property type="project" value="UniProtKB-UniRule"/>
</dbReference>
<dbReference type="CDD" id="cd01428">
    <property type="entry name" value="ADK"/>
    <property type="match status" value="1"/>
</dbReference>
<dbReference type="FunFam" id="3.40.50.300:FF:000106">
    <property type="entry name" value="Adenylate kinase mitochondrial"/>
    <property type="match status" value="1"/>
</dbReference>
<dbReference type="Gene3D" id="3.40.50.300">
    <property type="entry name" value="P-loop containing nucleotide triphosphate hydrolases"/>
    <property type="match status" value="1"/>
</dbReference>
<dbReference type="HAMAP" id="MF_00235">
    <property type="entry name" value="Adenylate_kinase_Adk"/>
    <property type="match status" value="1"/>
</dbReference>
<dbReference type="InterPro" id="IPR006259">
    <property type="entry name" value="Adenyl_kin_sub"/>
</dbReference>
<dbReference type="InterPro" id="IPR000850">
    <property type="entry name" value="Adenylat/UMP-CMP_kin"/>
</dbReference>
<dbReference type="InterPro" id="IPR033690">
    <property type="entry name" value="Adenylat_kinase_CS"/>
</dbReference>
<dbReference type="InterPro" id="IPR007862">
    <property type="entry name" value="Adenylate_kinase_lid-dom"/>
</dbReference>
<dbReference type="InterPro" id="IPR036193">
    <property type="entry name" value="ADK_active_lid_dom_sf"/>
</dbReference>
<dbReference type="InterPro" id="IPR027417">
    <property type="entry name" value="P-loop_NTPase"/>
</dbReference>
<dbReference type="NCBIfam" id="TIGR01351">
    <property type="entry name" value="adk"/>
    <property type="match status" value="1"/>
</dbReference>
<dbReference type="NCBIfam" id="NF001380">
    <property type="entry name" value="PRK00279.1-2"/>
    <property type="match status" value="1"/>
</dbReference>
<dbReference type="NCBIfam" id="NF001381">
    <property type="entry name" value="PRK00279.1-3"/>
    <property type="match status" value="1"/>
</dbReference>
<dbReference type="NCBIfam" id="NF011100">
    <property type="entry name" value="PRK14527.1"/>
    <property type="match status" value="1"/>
</dbReference>
<dbReference type="NCBIfam" id="NF011105">
    <property type="entry name" value="PRK14532.1"/>
    <property type="match status" value="1"/>
</dbReference>
<dbReference type="PANTHER" id="PTHR23359">
    <property type="entry name" value="NUCLEOTIDE KINASE"/>
    <property type="match status" value="1"/>
</dbReference>
<dbReference type="Pfam" id="PF00406">
    <property type="entry name" value="ADK"/>
    <property type="match status" value="1"/>
</dbReference>
<dbReference type="Pfam" id="PF05191">
    <property type="entry name" value="ADK_lid"/>
    <property type="match status" value="1"/>
</dbReference>
<dbReference type="PRINTS" id="PR00094">
    <property type="entry name" value="ADENYLTKNASE"/>
</dbReference>
<dbReference type="SUPFAM" id="SSF57774">
    <property type="entry name" value="Microbial and mitochondrial ADK, insert 'zinc finger' domain"/>
    <property type="match status" value="1"/>
</dbReference>
<dbReference type="SUPFAM" id="SSF52540">
    <property type="entry name" value="P-loop containing nucleoside triphosphate hydrolases"/>
    <property type="match status" value="1"/>
</dbReference>
<dbReference type="PROSITE" id="PS00113">
    <property type="entry name" value="ADENYLATE_KINASE"/>
    <property type="match status" value="1"/>
</dbReference>
<evidence type="ECO:0000255" key="1">
    <source>
        <dbReference type="HAMAP-Rule" id="MF_00235"/>
    </source>
</evidence>
<feature type="chain" id="PRO_1000021705" description="Adenylate kinase">
    <location>
        <begin position="1"/>
        <end position="224"/>
    </location>
</feature>
<feature type="region of interest" description="NMP" evidence="1">
    <location>
        <begin position="30"/>
        <end position="59"/>
    </location>
</feature>
<feature type="region of interest" description="LID" evidence="1">
    <location>
        <begin position="126"/>
        <end position="164"/>
    </location>
</feature>
<feature type="binding site" evidence="1">
    <location>
        <begin position="10"/>
        <end position="15"/>
    </location>
    <ligand>
        <name>ATP</name>
        <dbReference type="ChEBI" id="CHEBI:30616"/>
    </ligand>
</feature>
<feature type="binding site" evidence="1">
    <location>
        <position position="31"/>
    </location>
    <ligand>
        <name>AMP</name>
        <dbReference type="ChEBI" id="CHEBI:456215"/>
    </ligand>
</feature>
<feature type="binding site" evidence="1">
    <location>
        <position position="36"/>
    </location>
    <ligand>
        <name>AMP</name>
        <dbReference type="ChEBI" id="CHEBI:456215"/>
    </ligand>
</feature>
<feature type="binding site" evidence="1">
    <location>
        <begin position="57"/>
        <end position="59"/>
    </location>
    <ligand>
        <name>AMP</name>
        <dbReference type="ChEBI" id="CHEBI:456215"/>
    </ligand>
</feature>
<feature type="binding site" evidence="1">
    <location>
        <begin position="85"/>
        <end position="88"/>
    </location>
    <ligand>
        <name>AMP</name>
        <dbReference type="ChEBI" id="CHEBI:456215"/>
    </ligand>
</feature>
<feature type="binding site" evidence="1">
    <location>
        <position position="92"/>
    </location>
    <ligand>
        <name>AMP</name>
        <dbReference type="ChEBI" id="CHEBI:456215"/>
    </ligand>
</feature>
<feature type="binding site" evidence="1">
    <location>
        <position position="127"/>
    </location>
    <ligand>
        <name>ATP</name>
        <dbReference type="ChEBI" id="CHEBI:30616"/>
    </ligand>
</feature>
<feature type="binding site" evidence="1">
    <location>
        <position position="130"/>
    </location>
    <ligand>
        <name>Zn(2+)</name>
        <dbReference type="ChEBI" id="CHEBI:29105"/>
        <note>structural</note>
    </ligand>
</feature>
<feature type="binding site" evidence="1">
    <location>
        <position position="133"/>
    </location>
    <ligand>
        <name>Zn(2+)</name>
        <dbReference type="ChEBI" id="CHEBI:29105"/>
        <note>structural</note>
    </ligand>
</feature>
<feature type="binding site" evidence="1">
    <location>
        <position position="150"/>
    </location>
    <ligand>
        <name>Zn(2+)</name>
        <dbReference type="ChEBI" id="CHEBI:29105"/>
        <note>structural</note>
    </ligand>
</feature>
<feature type="binding site" evidence="1">
    <location>
        <position position="153"/>
    </location>
    <ligand>
        <name>Zn(2+)</name>
        <dbReference type="ChEBI" id="CHEBI:29105"/>
        <note>structural</note>
    </ligand>
</feature>
<feature type="binding site" evidence="1">
    <location>
        <position position="161"/>
    </location>
    <ligand>
        <name>AMP</name>
        <dbReference type="ChEBI" id="CHEBI:456215"/>
    </ligand>
</feature>
<feature type="binding site" evidence="1">
    <location>
        <position position="172"/>
    </location>
    <ligand>
        <name>AMP</name>
        <dbReference type="ChEBI" id="CHEBI:456215"/>
    </ligand>
</feature>
<feature type="binding site" evidence="1">
    <location>
        <position position="200"/>
    </location>
    <ligand>
        <name>ATP</name>
        <dbReference type="ChEBI" id="CHEBI:30616"/>
    </ligand>
</feature>
<sequence length="224" mass="23999">MNIILLGPPGAGKGTQAKILQDRYGVAQIATGDMLRAEVKAGTELGRAAKAVMESGALVSDEIIIGMLRNRLSQPDCRNGFILDGFPRTVPQAEALDTMLAEQKFDLDAVILLKVDEAVLVERISGRFTCAHCGAGYHDKFHPTGVPGVCDKCGSHDFVRRPDDKAEVVKDRLVAYNAQTAPILPYYEQKGRLHVVDGMAAMDQVTAEIEGALRRAGVAAPATA</sequence>
<comment type="function">
    <text evidence="1">Catalyzes the reversible transfer of the terminal phosphate group between ATP and AMP. Plays an important role in cellular energy homeostasis and in adenine nucleotide metabolism.</text>
</comment>
<comment type="catalytic activity">
    <reaction evidence="1">
        <text>AMP + ATP = 2 ADP</text>
        <dbReference type="Rhea" id="RHEA:12973"/>
        <dbReference type="ChEBI" id="CHEBI:30616"/>
        <dbReference type="ChEBI" id="CHEBI:456215"/>
        <dbReference type="ChEBI" id="CHEBI:456216"/>
        <dbReference type="EC" id="2.7.4.3"/>
    </reaction>
</comment>
<comment type="pathway">
    <text evidence="1">Purine metabolism; AMP biosynthesis via salvage pathway; AMP from ADP: step 1/1.</text>
</comment>
<comment type="subunit">
    <text evidence="1">Monomer.</text>
</comment>
<comment type="subcellular location">
    <subcellularLocation>
        <location evidence="1">Cytoplasm</location>
    </subcellularLocation>
</comment>
<comment type="domain">
    <text evidence="1">Consists of three domains, a large central CORE domain and two small peripheral domains, NMPbind and LID, which undergo movements during catalysis. The LID domain closes over the site of phosphoryl transfer upon ATP binding. Assembling and dissambling the active center during each catalytic cycle provides an effective means to prevent ATP hydrolysis. Some bacteria have evolved a zinc-coordinating structure that stabilizes the LID domain.</text>
</comment>
<comment type="similarity">
    <text evidence="1">Belongs to the adenylate kinase family.</text>
</comment>
<accession>A5FZU4</accession>
<organism>
    <name type="scientific">Acidiphilium cryptum (strain JF-5)</name>
    <dbReference type="NCBI Taxonomy" id="349163"/>
    <lineage>
        <taxon>Bacteria</taxon>
        <taxon>Pseudomonadati</taxon>
        <taxon>Pseudomonadota</taxon>
        <taxon>Alphaproteobacteria</taxon>
        <taxon>Acetobacterales</taxon>
        <taxon>Acidocellaceae</taxon>
        <taxon>Acidiphilium</taxon>
    </lineage>
</organism>
<keyword id="KW-0067">ATP-binding</keyword>
<keyword id="KW-0963">Cytoplasm</keyword>
<keyword id="KW-0418">Kinase</keyword>
<keyword id="KW-0479">Metal-binding</keyword>
<keyword id="KW-0545">Nucleotide biosynthesis</keyword>
<keyword id="KW-0547">Nucleotide-binding</keyword>
<keyword id="KW-1185">Reference proteome</keyword>
<keyword id="KW-0808">Transferase</keyword>
<keyword id="KW-0862">Zinc</keyword>
<reference key="1">
    <citation type="submission" date="2007-05" db="EMBL/GenBank/DDBJ databases">
        <title>Complete sequence of chromosome of Acidiphilium cryptum JF-5.</title>
        <authorList>
            <consortium name="US DOE Joint Genome Institute"/>
            <person name="Copeland A."/>
            <person name="Lucas S."/>
            <person name="Lapidus A."/>
            <person name="Barry K."/>
            <person name="Detter J.C."/>
            <person name="Glavina del Rio T."/>
            <person name="Hammon N."/>
            <person name="Israni S."/>
            <person name="Dalin E."/>
            <person name="Tice H."/>
            <person name="Pitluck S."/>
            <person name="Sims D."/>
            <person name="Brettin T."/>
            <person name="Bruce D."/>
            <person name="Han C."/>
            <person name="Schmutz J."/>
            <person name="Larimer F."/>
            <person name="Land M."/>
            <person name="Hauser L."/>
            <person name="Kyrpides N."/>
            <person name="Kim E."/>
            <person name="Magnuson T."/>
            <person name="Richardson P."/>
        </authorList>
    </citation>
    <scope>NUCLEOTIDE SEQUENCE [LARGE SCALE GENOMIC DNA]</scope>
    <source>
        <strain>JF-5</strain>
    </source>
</reference>
<proteinExistence type="inferred from homology"/>